<comment type="function">
    <text evidence="2">Plays a key role in steroid hormone synthesis by enhancing the metabolism of cholesterol into pregnenolone. Mediates the transfer of cholesterol from the outer mitochondrial membrane to the inner mitochondrial membrane where it is cleaved to pregnenolone (By similarity).</text>
</comment>
<comment type="catalytic activity">
    <reaction evidence="2">
        <text>cholesterol(in) = cholesterol(out)</text>
        <dbReference type="Rhea" id="RHEA:39747"/>
        <dbReference type="ChEBI" id="CHEBI:16113"/>
    </reaction>
</comment>
<comment type="pathway">
    <text evidence="2">Steroid metabolism; cholesterol metabolism.</text>
</comment>
<comment type="subunit">
    <text evidence="4">May interact with TSPO.</text>
</comment>
<comment type="subcellular location">
    <subcellularLocation>
        <location evidence="3">Mitochondrion</location>
    </subcellularLocation>
</comment>
<evidence type="ECO:0000250" key="1"/>
<evidence type="ECO:0000250" key="2">
    <source>
        <dbReference type="UniProtKB" id="P49675"/>
    </source>
</evidence>
<evidence type="ECO:0000250" key="3">
    <source>
        <dbReference type="UniProtKB" id="P51557"/>
    </source>
</evidence>
<evidence type="ECO:0000250" key="4">
    <source>
        <dbReference type="UniProtKB" id="P79245"/>
    </source>
</evidence>
<evidence type="ECO:0000255" key="5">
    <source>
        <dbReference type="PROSITE-ProRule" id="PRU00197"/>
    </source>
</evidence>
<proteinExistence type="evidence at transcript level"/>
<dbReference type="EMBL" id="AF031697">
    <property type="protein sequence ID" value="AAC04704.1"/>
    <property type="molecule type" value="mRNA"/>
</dbReference>
<dbReference type="EMBL" id="AF031696">
    <property type="protein sequence ID" value="AAC04703.1"/>
    <property type="molecule type" value="mRNA"/>
</dbReference>
<dbReference type="RefSeq" id="NP_001075269.2">
    <property type="nucleotide sequence ID" value="NM_001081800.2"/>
</dbReference>
<dbReference type="SMR" id="O46689"/>
<dbReference type="FunCoup" id="O46689">
    <property type="interactions" value="487"/>
</dbReference>
<dbReference type="STRING" id="9796.ENSECAP00000023633"/>
<dbReference type="PaxDb" id="9796-ENSECAP00000023633"/>
<dbReference type="GeneID" id="100009707"/>
<dbReference type="KEGG" id="ecb:100009707"/>
<dbReference type="CTD" id="6770"/>
<dbReference type="InParanoid" id="O46689"/>
<dbReference type="OrthoDB" id="74575at2759"/>
<dbReference type="UniPathway" id="UPA00296"/>
<dbReference type="Proteomes" id="UP000002281">
    <property type="component" value="Unplaced"/>
</dbReference>
<dbReference type="GO" id="GO:0005739">
    <property type="term" value="C:mitochondrion"/>
    <property type="evidence" value="ECO:0007669"/>
    <property type="project" value="UniProtKB-SubCell"/>
</dbReference>
<dbReference type="GO" id="GO:0015485">
    <property type="term" value="F:cholesterol binding"/>
    <property type="evidence" value="ECO:0000318"/>
    <property type="project" value="GO_Central"/>
</dbReference>
<dbReference type="GO" id="GO:0120020">
    <property type="term" value="F:cholesterol transfer activity"/>
    <property type="evidence" value="ECO:0007669"/>
    <property type="project" value="InterPro"/>
</dbReference>
<dbReference type="GO" id="GO:0008203">
    <property type="term" value="P:cholesterol metabolic process"/>
    <property type="evidence" value="ECO:0007669"/>
    <property type="project" value="UniProtKB-UniPathway"/>
</dbReference>
<dbReference type="GO" id="GO:0032367">
    <property type="term" value="P:intracellular cholesterol transport"/>
    <property type="evidence" value="ECO:0000318"/>
    <property type="project" value="GO_Central"/>
</dbReference>
<dbReference type="GO" id="GO:0050810">
    <property type="term" value="P:regulation of steroid biosynthetic process"/>
    <property type="evidence" value="ECO:0000318"/>
    <property type="project" value="GO_Central"/>
</dbReference>
<dbReference type="GO" id="GO:0006694">
    <property type="term" value="P:steroid biosynthetic process"/>
    <property type="evidence" value="ECO:0000318"/>
    <property type="project" value="GO_Central"/>
</dbReference>
<dbReference type="CDD" id="cd08905">
    <property type="entry name" value="START_STARD1-like"/>
    <property type="match status" value="1"/>
</dbReference>
<dbReference type="FunFam" id="3.30.530.20:FF:000015">
    <property type="entry name" value="Steroidogenic acute regulatory protein, mitochondrial"/>
    <property type="match status" value="1"/>
</dbReference>
<dbReference type="Gene3D" id="3.30.530.20">
    <property type="match status" value="1"/>
</dbReference>
<dbReference type="InterPro" id="IPR029866">
    <property type="entry name" value="StAR"/>
</dbReference>
<dbReference type="InterPro" id="IPR000799">
    <property type="entry name" value="StAR-like"/>
</dbReference>
<dbReference type="InterPro" id="IPR023393">
    <property type="entry name" value="START-like_dom_sf"/>
</dbReference>
<dbReference type="InterPro" id="IPR002913">
    <property type="entry name" value="START_lipid-bd_dom"/>
</dbReference>
<dbReference type="PANTHER" id="PTHR46489">
    <property type="entry name" value="STEROIDOGENIC ACUTE REGULATORY PROTEIN, MITOCHONDRIAL"/>
    <property type="match status" value="1"/>
</dbReference>
<dbReference type="PANTHER" id="PTHR46489:SF1">
    <property type="entry name" value="STEROIDOGENIC ACUTE REGULATORY PROTEIN, MITOCHONDRIAL"/>
    <property type="match status" value="1"/>
</dbReference>
<dbReference type="Pfam" id="PF01852">
    <property type="entry name" value="START"/>
    <property type="match status" value="1"/>
</dbReference>
<dbReference type="PRINTS" id="PR00978">
    <property type="entry name" value="STARPROTEIN"/>
</dbReference>
<dbReference type="SMART" id="SM00234">
    <property type="entry name" value="START"/>
    <property type="match status" value="1"/>
</dbReference>
<dbReference type="SUPFAM" id="SSF55961">
    <property type="entry name" value="Bet v1-like"/>
    <property type="match status" value="1"/>
</dbReference>
<dbReference type="PROSITE" id="PS50848">
    <property type="entry name" value="START"/>
    <property type="match status" value="1"/>
</dbReference>
<gene>
    <name type="primary">STAR</name>
</gene>
<sequence length="285" mass="31853">MLLATFKLCAGSSYRHVRNMKGLRHQAALAIGQELNWRAPGGPTQSGWINQVRRQSSLLGSQLEDTLYSDQELAYIQQGEEAMQKALGILRNQEGWKEENQQANGDKVLSKVVPDVGKVFRLEVEVDQPMERLYEELVERMEAMGEWNPNVKEIKVLQKIGKDTVITHELAAESAGNLVGPRDFVSVRCAKRRGSTCVLAGMATQFEEMPEQKGVIRAEHGPTCMVLHPLAGSPSKTKLTWLLSIDLKGWLPKTIINQVLSQTQVDFANHLRKRLESSPAPEARC</sequence>
<feature type="transit peptide" description="Mitochondrion" evidence="1">
    <location>
        <begin position="1"/>
        <end position="63"/>
    </location>
</feature>
<feature type="chain" id="PRO_0000033315" description="Steroidogenic acute regulatory protein, mitochondrial">
    <location>
        <begin position="64"/>
        <end position="285"/>
    </location>
</feature>
<feature type="domain" description="START" evidence="5">
    <location>
        <begin position="67"/>
        <end position="280"/>
    </location>
</feature>
<feature type="modified residue" description="Phosphoserine; by PKA" evidence="2">
    <location>
        <position position="57"/>
    </location>
</feature>
<feature type="modified residue" description="Phosphoserine; by PKA" evidence="2">
    <location>
        <position position="195"/>
    </location>
</feature>
<reference key="1">
    <citation type="journal article" date="1999" name="Endocrinology">
        <title>Human chorionic gonadotropin induces an inverse regulation of steroidogenic acute regulatory protein messenger ribonucleic acid in theca interna and granulosa cells of equine preovulatory follicles.</title>
        <authorList>
            <person name="Kerban A."/>
            <person name="Boerboom D."/>
            <person name="Sirois J."/>
        </authorList>
    </citation>
    <scope>NUCLEOTIDE SEQUENCE [MRNA]</scope>
    <source>
        <tissue>Follicular cell</tissue>
    </source>
</reference>
<organism>
    <name type="scientific">Equus caballus</name>
    <name type="common">Horse</name>
    <dbReference type="NCBI Taxonomy" id="9796"/>
    <lineage>
        <taxon>Eukaryota</taxon>
        <taxon>Metazoa</taxon>
        <taxon>Chordata</taxon>
        <taxon>Craniata</taxon>
        <taxon>Vertebrata</taxon>
        <taxon>Euteleostomi</taxon>
        <taxon>Mammalia</taxon>
        <taxon>Eutheria</taxon>
        <taxon>Laurasiatheria</taxon>
        <taxon>Perissodactyla</taxon>
        <taxon>Equidae</taxon>
        <taxon>Equus</taxon>
    </lineage>
</organism>
<accession>O46689</accession>
<keyword id="KW-0445">Lipid transport</keyword>
<keyword id="KW-0446">Lipid-binding</keyword>
<keyword id="KW-0496">Mitochondrion</keyword>
<keyword id="KW-0597">Phosphoprotein</keyword>
<keyword id="KW-1185">Reference proteome</keyword>
<keyword id="KW-0755">Steroidogenesis</keyword>
<keyword id="KW-0809">Transit peptide</keyword>
<keyword id="KW-0813">Transport</keyword>
<protein>
    <recommendedName>
        <fullName>Steroidogenic acute regulatory protein, mitochondrial</fullName>
        <shortName>StAR</shortName>
    </recommendedName>
    <alternativeName>
        <fullName>START domain-containing protein 1</fullName>
        <shortName>StARD1</shortName>
    </alternativeName>
</protein>
<name>STAR_HORSE</name>